<proteinExistence type="inferred from homology"/>
<reference key="1">
    <citation type="submission" date="2007-08" db="EMBL/GenBank/DDBJ databases">
        <title>Complete sequence of Thermotoga lettingae TMO.</title>
        <authorList>
            <consortium name="US DOE Joint Genome Institute"/>
            <person name="Copeland A."/>
            <person name="Lucas S."/>
            <person name="Lapidus A."/>
            <person name="Barry K."/>
            <person name="Glavina del Rio T."/>
            <person name="Dalin E."/>
            <person name="Tice H."/>
            <person name="Pitluck S."/>
            <person name="Foster B."/>
            <person name="Bruce D."/>
            <person name="Schmutz J."/>
            <person name="Larimer F."/>
            <person name="Land M."/>
            <person name="Hauser L."/>
            <person name="Kyrpides N."/>
            <person name="Mikhailova N."/>
            <person name="Nelson K."/>
            <person name="Gogarten J.P."/>
            <person name="Noll K."/>
            <person name="Richardson P."/>
        </authorList>
    </citation>
    <scope>NUCLEOTIDE SEQUENCE [LARGE SCALE GENOMIC DNA]</scope>
    <source>
        <strain>ATCC BAA-301 / DSM 14385 / NBRC 107922 / TMO</strain>
    </source>
</reference>
<accession>A8F6X2</accession>
<dbReference type="EMBL" id="CP000812">
    <property type="protein sequence ID" value="ABV33906.1"/>
    <property type="molecule type" value="Genomic_DNA"/>
</dbReference>
<dbReference type="RefSeq" id="WP_012003382.1">
    <property type="nucleotide sequence ID" value="NZ_BSDV01000001.1"/>
</dbReference>
<dbReference type="SMR" id="A8F6X2"/>
<dbReference type="STRING" id="416591.Tlet_1349"/>
<dbReference type="KEGG" id="tle:Tlet_1349"/>
<dbReference type="eggNOG" id="COG0292">
    <property type="taxonomic scope" value="Bacteria"/>
</dbReference>
<dbReference type="HOGENOM" id="CLU_123265_0_1_0"/>
<dbReference type="OrthoDB" id="9808966at2"/>
<dbReference type="Proteomes" id="UP000002016">
    <property type="component" value="Chromosome"/>
</dbReference>
<dbReference type="GO" id="GO:1990904">
    <property type="term" value="C:ribonucleoprotein complex"/>
    <property type="evidence" value="ECO:0007669"/>
    <property type="project" value="UniProtKB-KW"/>
</dbReference>
<dbReference type="GO" id="GO:0005840">
    <property type="term" value="C:ribosome"/>
    <property type="evidence" value="ECO:0007669"/>
    <property type="project" value="UniProtKB-KW"/>
</dbReference>
<dbReference type="GO" id="GO:0019843">
    <property type="term" value="F:rRNA binding"/>
    <property type="evidence" value="ECO:0007669"/>
    <property type="project" value="UniProtKB-UniRule"/>
</dbReference>
<dbReference type="GO" id="GO:0003735">
    <property type="term" value="F:structural constituent of ribosome"/>
    <property type="evidence" value="ECO:0007669"/>
    <property type="project" value="InterPro"/>
</dbReference>
<dbReference type="GO" id="GO:0000027">
    <property type="term" value="P:ribosomal large subunit assembly"/>
    <property type="evidence" value="ECO:0007669"/>
    <property type="project" value="UniProtKB-UniRule"/>
</dbReference>
<dbReference type="GO" id="GO:0006412">
    <property type="term" value="P:translation"/>
    <property type="evidence" value="ECO:0007669"/>
    <property type="project" value="InterPro"/>
</dbReference>
<dbReference type="CDD" id="cd07026">
    <property type="entry name" value="Ribosomal_L20"/>
    <property type="match status" value="1"/>
</dbReference>
<dbReference type="FunFam" id="1.10.1900.20:FF:000001">
    <property type="entry name" value="50S ribosomal protein L20"/>
    <property type="match status" value="1"/>
</dbReference>
<dbReference type="Gene3D" id="6.10.160.10">
    <property type="match status" value="1"/>
</dbReference>
<dbReference type="Gene3D" id="1.10.1900.20">
    <property type="entry name" value="Ribosomal protein L20"/>
    <property type="match status" value="1"/>
</dbReference>
<dbReference type="HAMAP" id="MF_00382">
    <property type="entry name" value="Ribosomal_bL20"/>
    <property type="match status" value="1"/>
</dbReference>
<dbReference type="InterPro" id="IPR005813">
    <property type="entry name" value="Ribosomal_bL20"/>
</dbReference>
<dbReference type="InterPro" id="IPR049946">
    <property type="entry name" value="RIBOSOMAL_L20_CS"/>
</dbReference>
<dbReference type="InterPro" id="IPR035566">
    <property type="entry name" value="Ribosomal_protein_bL20_C"/>
</dbReference>
<dbReference type="NCBIfam" id="TIGR01032">
    <property type="entry name" value="rplT_bact"/>
    <property type="match status" value="1"/>
</dbReference>
<dbReference type="PANTHER" id="PTHR10986">
    <property type="entry name" value="39S RIBOSOMAL PROTEIN L20"/>
    <property type="match status" value="1"/>
</dbReference>
<dbReference type="Pfam" id="PF00453">
    <property type="entry name" value="Ribosomal_L20"/>
    <property type="match status" value="1"/>
</dbReference>
<dbReference type="PRINTS" id="PR00062">
    <property type="entry name" value="RIBOSOMALL20"/>
</dbReference>
<dbReference type="SUPFAM" id="SSF74731">
    <property type="entry name" value="Ribosomal protein L20"/>
    <property type="match status" value="1"/>
</dbReference>
<dbReference type="PROSITE" id="PS00937">
    <property type="entry name" value="RIBOSOMAL_L20"/>
    <property type="match status" value="1"/>
</dbReference>
<protein>
    <recommendedName>
        <fullName evidence="1">Large ribosomal subunit protein bL20</fullName>
    </recommendedName>
    <alternativeName>
        <fullName evidence="2">50S ribosomal protein L20</fullName>
    </alternativeName>
</protein>
<organism>
    <name type="scientific">Pseudothermotoga lettingae (strain ATCC BAA-301 / DSM 14385 / NBRC 107922 / TMO)</name>
    <name type="common">Thermotoga lettingae</name>
    <dbReference type="NCBI Taxonomy" id="416591"/>
    <lineage>
        <taxon>Bacteria</taxon>
        <taxon>Thermotogati</taxon>
        <taxon>Thermotogota</taxon>
        <taxon>Thermotogae</taxon>
        <taxon>Thermotogales</taxon>
        <taxon>Thermotogaceae</taxon>
        <taxon>Pseudothermotoga</taxon>
    </lineage>
</organism>
<gene>
    <name evidence="1" type="primary">rplT</name>
    <name type="ordered locus">Tlet_1349</name>
</gene>
<evidence type="ECO:0000255" key="1">
    <source>
        <dbReference type="HAMAP-Rule" id="MF_00382"/>
    </source>
</evidence>
<evidence type="ECO:0000305" key="2"/>
<keyword id="KW-1185">Reference proteome</keyword>
<keyword id="KW-0687">Ribonucleoprotein</keyword>
<keyword id="KW-0689">Ribosomal protein</keyword>
<keyword id="KW-0694">RNA-binding</keyword>
<keyword id="KW-0699">rRNA-binding</keyword>
<feature type="chain" id="PRO_1000060693" description="Large ribosomal subunit protein bL20">
    <location>
        <begin position="1"/>
        <end position="123"/>
    </location>
</feature>
<sequence>MRIKRSVHARKKRREKFLKSAKGYRGAIKRRYRLAKQHYYRAKWYAYAGRKLKKRDFRSLWITRINIAARQNGLKYSQLMHGLKLANISVNRKMLAELAINDPPAFSEYVKIAKEQLQKEAVK</sequence>
<comment type="function">
    <text evidence="1">Binds directly to 23S ribosomal RNA and is necessary for the in vitro assembly process of the 50S ribosomal subunit. It is not involved in the protein synthesizing functions of that subunit.</text>
</comment>
<comment type="similarity">
    <text evidence="1">Belongs to the bacterial ribosomal protein bL20 family.</text>
</comment>
<name>RL20_PSELT</name>